<accession>P19228</accession>
<name>CASA1_MOUSE</name>
<comment type="function">
    <text>Important role in the capacity of milk to transport calcium phosphate.</text>
</comment>
<comment type="subcellular location">
    <subcellularLocation>
        <location>Secreted</location>
    </subcellularLocation>
</comment>
<comment type="tissue specificity">
    <text>Mammary gland specific. Secreted in milk.</text>
</comment>
<comment type="similarity">
    <text evidence="8">Belongs to the alpha-casein family.</text>
</comment>
<sequence>MKLLILTCLVAAAFAMPRLHSRNAVSSQTQQQHSSSEEIFKQPKYLNLNQEFVNNMNRQRALLTEQNDEIKVTMDAASEEQAMASAQEDSSISSSSEESEEAIPNITEQKNIANEDMLNQCTLEQLQRQFKYNQLLQKASLAKQASLFQQPSLVQQASLFQQPSLLQQASLFQQPSMAQQASLLQQLLLAQQPSLALQVSPAQQSSLVQQAFLAQQASLAQKHHPRLSQSYYPHMEQPYRMNAYSQVQMRHPMSVVDQALAQFSVQPFPQIFQYDAFPLWAYFPQDMQYLTPKAVLNTFKPIVSKDTEKTNVW</sequence>
<feature type="signal peptide" evidence="1">
    <location>
        <begin position="1"/>
        <end position="15"/>
    </location>
</feature>
<feature type="chain" id="PRO_0000004457" description="Alpha-S1-casein">
    <location>
        <begin position="16"/>
        <end position="313"/>
    </location>
</feature>
<feature type="repeat" description="1">
    <location>
        <begin position="135"/>
        <end position="140"/>
    </location>
</feature>
<feature type="repeat" description="2">
    <location>
        <begin position="141"/>
        <end position="146"/>
    </location>
</feature>
<feature type="repeat" description="3">
    <location>
        <begin position="147"/>
        <end position="152"/>
    </location>
</feature>
<feature type="repeat" description="4">
    <location>
        <begin position="153"/>
        <end position="158"/>
    </location>
</feature>
<feature type="repeat" description="5">
    <location>
        <begin position="159"/>
        <end position="164"/>
    </location>
</feature>
<feature type="repeat" description="6">
    <location>
        <begin position="165"/>
        <end position="170"/>
    </location>
</feature>
<feature type="repeat" description="7">
    <location>
        <begin position="171"/>
        <end position="176"/>
    </location>
</feature>
<feature type="repeat" description="8">
    <location>
        <begin position="177"/>
        <end position="182"/>
    </location>
</feature>
<feature type="repeat" description="9">
    <location>
        <begin position="183"/>
        <end position="188"/>
    </location>
</feature>
<feature type="repeat" description="10">
    <location>
        <begin position="189"/>
        <end position="194"/>
    </location>
</feature>
<feature type="repeat" description="11">
    <location>
        <begin position="195"/>
        <end position="200"/>
    </location>
</feature>
<feature type="repeat" description="12">
    <location>
        <begin position="201"/>
        <end position="206"/>
    </location>
</feature>
<feature type="repeat" description="13">
    <location>
        <begin position="207"/>
        <end position="212"/>
    </location>
</feature>
<feature type="repeat" description="14">
    <location>
        <begin position="213"/>
        <end position="218"/>
    </location>
</feature>
<feature type="repeat" description="15">
    <location>
        <begin position="219"/>
        <end position="224"/>
    </location>
</feature>
<feature type="region of interest" description="Disordered" evidence="7">
    <location>
        <begin position="77"/>
        <end position="111"/>
    </location>
</feature>
<feature type="region of interest" description="15 X 6 AA tandem repeats">
    <location>
        <begin position="135"/>
        <end position="224"/>
    </location>
</feature>
<feature type="compositionally biased region" description="Low complexity" evidence="7">
    <location>
        <begin position="77"/>
        <end position="96"/>
    </location>
</feature>
<feature type="modified residue" description="Phosphoserine" evidence="2">
    <location>
        <position position="90"/>
    </location>
</feature>
<feature type="modified residue" description="Phosphoserine" evidence="6">
    <location>
        <position position="91"/>
    </location>
</feature>
<feature type="modified residue" description="Phosphoserine" evidence="5">
    <location>
        <position position="93"/>
    </location>
</feature>
<feature type="modified residue" description="Phosphoserine" evidence="4">
    <location>
        <position position="94"/>
    </location>
</feature>
<feature type="modified residue" description="Phosphoserine" evidence="3">
    <location>
        <position position="95"/>
    </location>
</feature>
<feature type="modified residue" description="Phosphoserine" evidence="4">
    <location>
        <position position="96"/>
    </location>
</feature>
<dbReference type="EMBL" id="M36780">
    <property type="protein sequence ID" value="AAA37142.1"/>
    <property type="molecule type" value="mRNA"/>
</dbReference>
<dbReference type="EMBL" id="BC003859">
    <property type="protein sequence ID" value="AAH03859.1"/>
    <property type="molecule type" value="mRNA"/>
</dbReference>
<dbReference type="CCDS" id="CCDS51534.1"/>
<dbReference type="PIR" id="A36060">
    <property type="entry name" value="A36060"/>
</dbReference>
<dbReference type="RefSeq" id="NP_001272944.1">
    <property type="nucleotide sequence ID" value="NM_001286015.1"/>
</dbReference>
<dbReference type="RefSeq" id="NP_001272945.1">
    <property type="nucleotide sequence ID" value="NM_001286016.1"/>
</dbReference>
<dbReference type="RefSeq" id="NP_031810.1">
    <property type="nucleotide sequence ID" value="NM_007784.3"/>
</dbReference>
<dbReference type="FunCoup" id="P19228">
    <property type="interactions" value="56"/>
</dbReference>
<dbReference type="IntAct" id="P19228">
    <property type="interactions" value="2"/>
</dbReference>
<dbReference type="STRING" id="10090.ENSMUSP00000092225"/>
<dbReference type="PhosphoSitePlus" id="P19228"/>
<dbReference type="CPTAC" id="non-CPTAC-4019"/>
<dbReference type="PaxDb" id="10090-ENSMUSP00000092225"/>
<dbReference type="PeptideAtlas" id="P19228"/>
<dbReference type="Antibodypedia" id="24253">
    <property type="antibodies" value="179 antibodies from 22 providers"/>
</dbReference>
<dbReference type="DNASU" id="12990"/>
<dbReference type="Ensembl" id="ENSMUST00000094641.9">
    <property type="protein sequence ID" value="ENSMUSP00000092225.5"/>
    <property type="gene ID" value="ENSMUSG00000070702.10"/>
</dbReference>
<dbReference type="GeneID" id="12990"/>
<dbReference type="KEGG" id="mmu:12990"/>
<dbReference type="UCSC" id="uc029vix.2">
    <property type="organism name" value="mouse"/>
</dbReference>
<dbReference type="AGR" id="MGI:88540"/>
<dbReference type="CTD" id="1446"/>
<dbReference type="MGI" id="MGI:88540">
    <property type="gene designation" value="Csn1s1"/>
</dbReference>
<dbReference type="VEuPathDB" id="HostDB:ENSMUSG00000070702"/>
<dbReference type="eggNOG" id="ENOG502TEWT">
    <property type="taxonomic scope" value="Eukaryota"/>
</dbReference>
<dbReference type="GeneTree" id="ENSGT00390000017378"/>
<dbReference type="InParanoid" id="P19228"/>
<dbReference type="OMA" id="IFQYDAF"/>
<dbReference type="OrthoDB" id="9633928at2759"/>
<dbReference type="TreeFam" id="TF340763"/>
<dbReference type="Reactome" id="R-MMU-5223345">
    <property type="pathway name" value="Miscellaneous transport and binding events"/>
</dbReference>
<dbReference type="BioGRID-ORCS" id="12990">
    <property type="hits" value="0 hits in 76 CRISPR screens"/>
</dbReference>
<dbReference type="ChiTaRS" id="Csn1s1">
    <property type="organism name" value="mouse"/>
</dbReference>
<dbReference type="PRO" id="PR:P19228"/>
<dbReference type="Proteomes" id="UP000000589">
    <property type="component" value="Chromosome 5"/>
</dbReference>
<dbReference type="RNAct" id="P19228">
    <property type="molecule type" value="protein"/>
</dbReference>
<dbReference type="Bgee" id="ENSMUSG00000070702">
    <property type="expression patterns" value="Expressed in thoracic mammary gland and 17 other cell types or tissues"/>
</dbReference>
<dbReference type="ExpressionAtlas" id="P19228">
    <property type="expression patterns" value="baseline and differential"/>
</dbReference>
<dbReference type="GO" id="GO:0005576">
    <property type="term" value="C:extracellular region"/>
    <property type="evidence" value="ECO:0000314"/>
    <property type="project" value="MGI"/>
</dbReference>
<dbReference type="InterPro" id="IPR026999">
    <property type="entry name" value="Alpha-s1_casein"/>
</dbReference>
<dbReference type="InterPro" id="IPR001588">
    <property type="entry name" value="Casein"/>
</dbReference>
<dbReference type="InterPro" id="IPR031305">
    <property type="entry name" value="Casein_CS"/>
</dbReference>
<dbReference type="PANTHER" id="PTHR10240">
    <property type="entry name" value="ALPHA-S1-CASEIN"/>
    <property type="match status" value="1"/>
</dbReference>
<dbReference type="PANTHER" id="PTHR10240:SF0">
    <property type="entry name" value="ALPHA-S1-CASEIN"/>
    <property type="match status" value="1"/>
</dbReference>
<dbReference type="Pfam" id="PF00363">
    <property type="entry name" value="Casein"/>
    <property type="match status" value="1"/>
</dbReference>
<dbReference type="PROSITE" id="PS00306">
    <property type="entry name" value="CASEIN_ALPHA_BETA"/>
    <property type="match status" value="1"/>
</dbReference>
<gene>
    <name type="primary">Csn1s1</name>
    <name type="synonym">Csn1</name>
    <name type="synonym">Csna</name>
</gene>
<keyword id="KW-0494">Milk protein</keyword>
<keyword id="KW-0597">Phosphoprotein</keyword>
<keyword id="KW-1185">Reference proteome</keyword>
<keyword id="KW-0677">Repeat</keyword>
<keyword id="KW-0964">Secreted</keyword>
<keyword id="KW-0732">Signal</keyword>
<organism>
    <name type="scientific">Mus musculus</name>
    <name type="common">Mouse</name>
    <dbReference type="NCBI Taxonomy" id="10090"/>
    <lineage>
        <taxon>Eukaryota</taxon>
        <taxon>Metazoa</taxon>
        <taxon>Chordata</taxon>
        <taxon>Craniata</taxon>
        <taxon>Vertebrata</taxon>
        <taxon>Euteleostomi</taxon>
        <taxon>Mammalia</taxon>
        <taxon>Eutheria</taxon>
        <taxon>Euarchontoglires</taxon>
        <taxon>Glires</taxon>
        <taxon>Rodentia</taxon>
        <taxon>Myomorpha</taxon>
        <taxon>Muroidea</taxon>
        <taxon>Muridae</taxon>
        <taxon>Murinae</taxon>
        <taxon>Mus</taxon>
        <taxon>Mus</taxon>
    </lineage>
</organism>
<protein>
    <recommendedName>
        <fullName>Alpha-S1-casein</fullName>
        <shortName>Alpha-casein</shortName>
    </recommendedName>
</protein>
<proteinExistence type="evidence at transcript level"/>
<evidence type="ECO:0000250" key="1"/>
<evidence type="ECO:0000250" key="2">
    <source>
        <dbReference type="UniProtKB" id="O97943"/>
    </source>
</evidence>
<evidence type="ECO:0000250" key="3">
    <source>
        <dbReference type="UniProtKB" id="P02662"/>
    </source>
</evidence>
<evidence type="ECO:0000250" key="4">
    <source>
        <dbReference type="UniProtKB" id="P04653"/>
    </source>
</evidence>
<evidence type="ECO:0000250" key="5">
    <source>
        <dbReference type="UniProtKB" id="P18626"/>
    </source>
</evidence>
<evidence type="ECO:0000250" key="6">
    <source>
        <dbReference type="UniProtKB" id="P47710"/>
    </source>
</evidence>
<evidence type="ECO:0000256" key="7">
    <source>
        <dbReference type="SAM" id="MobiDB-lite"/>
    </source>
</evidence>
<evidence type="ECO:0000305" key="8"/>
<reference key="1">
    <citation type="journal article" date="1990" name="Proc. Natl. Acad. Sci. U.S.A.">
        <title>Casein expression in cytotoxic T lymphocytes.</title>
        <authorList>
            <person name="Grusby M.J."/>
            <person name="Mitchell S.C."/>
            <person name="Nabavi N."/>
            <person name="Glimcher L.H."/>
        </authorList>
    </citation>
    <scope>NUCLEOTIDE SEQUENCE [MRNA]</scope>
</reference>
<reference key="2">
    <citation type="journal article" date="2004" name="Genome Res.">
        <title>The status, quality, and expansion of the NIH full-length cDNA project: the Mammalian Gene Collection (MGC).</title>
        <authorList>
            <consortium name="The MGC Project Team"/>
        </authorList>
    </citation>
    <scope>NUCLEOTIDE SEQUENCE [LARGE SCALE MRNA]</scope>
    <source>
        <strain>C57BL/6J</strain>
        <tissue>Mammary gland</tissue>
    </source>
</reference>